<organism>
    <name type="scientific">Prochlorococcus marinus (strain MIT 9313)</name>
    <dbReference type="NCBI Taxonomy" id="74547"/>
    <lineage>
        <taxon>Bacteria</taxon>
        <taxon>Bacillati</taxon>
        <taxon>Cyanobacteriota</taxon>
        <taxon>Cyanophyceae</taxon>
        <taxon>Synechococcales</taxon>
        <taxon>Prochlorococcaceae</taxon>
        <taxon>Prochlorococcus</taxon>
    </lineage>
</organism>
<accession>Q7TUN0</accession>
<name>CINAL_PROMM</name>
<feature type="chain" id="PRO_0000156773" description="CinA-like protein">
    <location>
        <begin position="1"/>
        <end position="429"/>
    </location>
</feature>
<reference key="1">
    <citation type="journal article" date="2003" name="Nature">
        <title>Genome divergence in two Prochlorococcus ecotypes reflects oceanic niche differentiation.</title>
        <authorList>
            <person name="Rocap G."/>
            <person name="Larimer F.W."/>
            <person name="Lamerdin J.E."/>
            <person name="Malfatti S."/>
            <person name="Chain P."/>
            <person name="Ahlgren N.A."/>
            <person name="Arellano A."/>
            <person name="Coleman M."/>
            <person name="Hauser L."/>
            <person name="Hess W.R."/>
            <person name="Johnson Z.I."/>
            <person name="Land M.L."/>
            <person name="Lindell D."/>
            <person name="Post A.F."/>
            <person name="Regala W."/>
            <person name="Shah M."/>
            <person name="Shaw S.L."/>
            <person name="Steglich C."/>
            <person name="Sullivan M.B."/>
            <person name="Ting C.S."/>
            <person name="Tolonen A."/>
            <person name="Webb E.A."/>
            <person name="Zinser E.R."/>
            <person name="Chisholm S.W."/>
        </authorList>
    </citation>
    <scope>NUCLEOTIDE SEQUENCE [LARGE SCALE GENOMIC DNA]</scope>
    <source>
        <strain>MIT 9313</strain>
    </source>
</reference>
<sequence>MPIAMVMAEASARHGVEILCIGTELLLGNILNSNARWLAEELAALGLPHYRQTVVGDNVERLKESVLEAVDRSRILITTGGLGPTPDDLTTETLAAAFDTPLEERPELWFEIQAKLTAGGSISAISNRKQALFPRGAEILPNPSGTAPGMIWCPRPGFTVLTFPGVPSEMKQMWSQTAVPWLRQHGGLADIFVSRLLRFTGIAESTLAEEVADLLEQGNPTVAPYAGLGEVKLRITARGATVEQARQLLDPVDAALRHRTGLFCYGSDDESLASVVLDLLRQRGETVVVAESCTGGGVGAALAAVPRASEVFLGGVIAYSNAIKQALLGISTDLLHQHGAVSDPVVRAMAEGARQRLGADWSIAVSGVAGPGGGTHAKPVGLVHIAVAGPHGCDASPVQFGVRRGRLAIQELSVVRSLDQLRRLLLDGS</sequence>
<proteinExistence type="inferred from homology"/>
<evidence type="ECO:0000255" key="1">
    <source>
        <dbReference type="HAMAP-Rule" id="MF_00226"/>
    </source>
</evidence>
<keyword id="KW-1185">Reference proteome</keyword>
<comment type="similarity">
    <text evidence="1">Belongs to the CinA family.</text>
</comment>
<protein>
    <recommendedName>
        <fullName evidence="1">CinA-like protein</fullName>
    </recommendedName>
</protein>
<dbReference type="EMBL" id="BX548175">
    <property type="protein sequence ID" value="CAE22020.1"/>
    <property type="molecule type" value="Genomic_DNA"/>
</dbReference>
<dbReference type="SMR" id="Q7TUN0"/>
<dbReference type="KEGG" id="pmt:PMT_1845"/>
<dbReference type="eggNOG" id="COG1058">
    <property type="taxonomic scope" value="Bacteria"/>
</dbReference>
<dbReference type="eggNOG" id="COG1546">
    <property type="taxonomic scope" value="Bacteria"/>
</dbReference>
<dbReference type="HOGENOM" id="CLU_030805_9_3_3"/>
<dbReference type="OrthoDB" id="9801454at2"/>
<dbReference type="Proteomes" id="UP000001423">
    <property type="component" value="Chromosome"/>
</dbReference>
<dbReference type="CDD" id="cd00885">
    <property type="entry name" value="cinA"/>
    <property type="match status" value="1"/>
</dbReference>
<dbReference type="Gene3D" id="3.30.70.2860">
    <property type="match status" value="1"/>
</dbReference>
<dbReference type="Gene3D" id="3.90.950.20">
    <property type="entry name" value="CinA-like"/>
    <property type="match status" value="1"/>
</dbReference>
<dbReference type="Gene3D" id="3.40.980.10">
    <property type="entry name" value="MoaB/Mog-like domain"/>
    <property type="match status" value="1"/>
</dbReference>
<dbReference type="HAMAP" id="MF_00226_B">
    <property type="entry name" value="CinA_B"/>
    <property type="match status" value="1"/>
</dbReference>
<dbReference type="InterPro" id="IPR050101">
    <property type="entry name" value="CinA"/>
</dbReference>
<dbReference type="InterPro" id="IPR036653">
    <property type="entry name" value="CinA-like_C"/>
</dbReference>
<dbReference type="InterPro" id="IPR008136">
    <property type="entry name" value="CinA_C"/>
</dbReference>
<dbReference type="InterPro" id="IPR041424">
    <property type="entry name" value="CinA_KH"/>
</dbReference>
<dbReference type="InterPro" id="IPR008135">
    <property type="entry name" value="Competence-induced_CinA"/>
</dbReference>
<dbReference type="InterPro" id="IPR036425">
    <property type="entry name" value="MoaB/Mog-like_dom_sf"/>
</dbReference>
<dbReference type="InterPro" id="IPR001453">
    <property type="entry name" value="MoaB/Mog_dom"/>
</dbReference>
<dbReference type="NCBIfam" id="TIGR00200">
    <property type="entry name" value="cinA_nterm"/>
    <property type="match status" value="1"/>
</dbReference>
<dbReference type="NCBIfam" id="TIGR00199">
    <property type="entry name" value="PncC_domain"/>
    <property type="match status" value="1"/>
</dbReference>
<dbReference type="NCBIfam" id="NF001813">
    <property type="entry name" value="PRK00549.1"/>
    <property type="match status" value="1"/>
</dbReference>
<dbReference type="PANTHER" id="PTHR13939">
    <property type="entry name" value="NICOTINAMIDE-NUCLEOTIDE AMIDOHYDROLASE PNCC"/>
    <property type="match status" value="1"/>
</dbReference>
<dbReference type="PANTHER" id="PTHR13939:SF0">
    <property type="entry name" value="NMN AMIDOHYDROLASE-LIKE PROTEIN YFAY"/>
    <property type="match status" value="1"/>
</dbReference>
<dbReference type="Pfam" id="PF02464">
    <property type="entry name" value="CinA"/>
    <property type="match status" value="1"/>
</dbReference>
<dbReference type="Pfam" id="PF18146">
    <property type="entry name" value="CinA_KH"/>
    <property type="match status" value="1"/>
</dbReference>
<dbReference type="Pfam" id="PF00994">
    <property type="entry name" value="MoCF_biosynth"/>
    <property type="match status" value="1"/>
</dbReference>
<dbReference type="PIRSF" id="PIRSF006728">
    <property type="entry name" value="CinA"/>
    <property type="match status" value="1"/>
</dbReference>
<dbReference type="SMART" id="SM00852">
    <property type="entry name" value="MoCF_biosynth"/>
    <property type="match status" value="1"/>
</dbReference>
<dbReference type="SUPFAM" id="SSF142433">
    <property type="entry name" value="CinA-like"/>
    <property type="match status" value="1"/>
</dbReference>
<dbReference type="SUPFAM" id="SSF53218">
    <property type="entry name" value="Molybdenum cofactor biosynthesis proteins"/>
    <property type="match status" value="1"/>
</dbReference>
<gene>
    <name type="ordered locus">PMT_1845</name>
</gene>